<proteinExistence type="inferred from homology"/>
<sequence>MSRNTSVALGPHFTSFIDAQVQGGRYGTASDVVRAGLRLLEEHETKVKALQDALNVRHQSGEPRPFDSEVFLSRMHTQHG</sequence>
<evidence type="ECO:0000250" key="1"/>
<evidence type="ECO:0000305" key="2"/>
<comment type="function">
    <text evidence="1">Antitoxin component of a type II toxin-antitoxin (TA) system. Neutralizes the effect of toxin ParE (By similarity).</text>
</comment>
<comment type="similarity">
    <text evidence="2">Belongs to the ParD antitoxin family.</text>
</comment>
<name>PARD_XYLFA</name>
<organism>
    <name type="scientific">Xylella fastidiosa (strain 9a5c)</name>
    <dbReference type="NCBI Taxonomy" id="160492"/>
    <lineage>
        <taxon>Bacteria</taxon>
        <taxon>Pseudomonadati</taxon>
        <taxon>Pseudomonadota</taxon>
        <taxon>Gammaproteobacteria</taxon>
        <taxon>Lysobacterales</taxon>
        <taxon>Lysobacteraceae</taxon>
        <taxon>Xylella</taxon>
    </lineage>
</organism>
<accession>Q9PBR9</accession>
<dbReference type="EMBL" id="AE003849">
    <property type="protein sequence ID" value="AAF84870.1"/>
    <property type="molecule type" value="Genomic_DNA"/>
</dbReference>
<dbReference type="PIR" id="F82602">
    <property type="entry name" value="F82602"/>
</dbReference>
<dbReference type="RefSeq" id="WP_010894524.1">
    <property type="nucleotide sequence ID" value="NC_002488.3"/>
</dbReference>
<dbReference type="SMR" id="Q9PBR9"/>
<dbReference type="STRING" id="160492.XF_2071"/>
<dbReference type="KEGG" id="xfa:XF_2071"/>
<dbReference type="eggNOG" id="COG3609">
    <property type="taxonomic scope" value="Bacteria"/>
</dbReference>
<dbReference type="HOGENOM" id="CLU_144805_2_0_6"/>
<dbReference type="Proteomes" id="UP000000812">
    <property type="component" value="Chromosome"/>
</dbReference>
<dbReference type="GO" id="GO:0006355">
    <property type="term" value="P:regulation of DNA-templated transcription"/>
    <property type="evidence" value="ECO:0007669"/>
    <property type="project" value="InterPro"/>
</dbReference>
<dbReference type="CDD" id="cd22231">
    <property type="entry name" value="RHH_NikR_HicB-like"/>
    <property type="match status" value="1"/>
</dbReference>
<dbReference type="Gene3D" id="6.10.10.120">
    <property type="entry name" value="Antitoxin ParD1-like"/>
    <property type="match status" value="1"/>
</dbReference>
<dbReference type="InterPro" id="IPR022789">
    <property type="entry name" value="ParD"/>
</dbReference>
<dbReference type="InterPro" id="IPR038296">
    <property type="entry name" value="ParD_sf"/>
</dbReference>
<dbReference type="InterPro" id="IPR010985">
    <property type="entry name" value="Ribbon_hlx_hlx"/>
</dbReference>
<dbReference type="NCBIfam" id="TIGR02606">
    <property type="entry name" value="antidote_CC2985"/>
    <property type="match status" value="1"/>
</dbReference>
<dbReference type="PANTHER" id="PTHR36582">
    <property type="entry name" value="ANTITOXIN PARD"/>
    <property type="match status" value="1"/>
</dbReference>
<dbReference type="PANTHER" id="PTHR36582:SF2">
    <property type="entry name" value="ANTITOXIN PARD"/>
    <property type="match status" value="1"/>
</dbReference>
<dbReference type="Pfam" id="PF03693">
    <property type="entry name" value="ParD_antitoxin"/>
    <property type="match status" value="1"/>
</dbReference>
<dbReference type="SUPFAM" id="SSF47598">
    <property type="entry name" value="Ribbon-helix-helix"/>
    <property type="match status" value="1"/>
</dbReference>
<protein>
    <recommendedName>
        <fullName>Antitoxin ParD</fullName>
    </recommendedName>
</protein>
<gene>
    <name type="primary">parD</name>
    <name type="ordered locus">XF_2071</name>
</gene>
<feature type="chain" id="PRO_0000216356" description="Antitoxin ParD">
    <location>
        <begin position="1"/>
        <end position="80"/>
    </location>
</feature>
<keyword id="KW-1277">Toxin-antitoxin system</keyword>
<reference key="1">
    <citation type="journal article" date="2000" name="Nature">
        <title>The genome sequence of the plant pathogen Xylella fastidiosa.</title>
        <authorList>
            <person name="Simpson A.J.G."/>
            <person name="Reinach F.C."/>
            <person name="Arruda P."/>
            <person name="Abreu F.A."/>
            <person name="Acencio M."/>
            <person name="Alvarenga R."/>
            <person name="Alves L.M.C."/>
            <person name="Araya J.E."/>
            <person name="Baia G.S."/>
            <person name="Baptista C.S."/>
            <person name="Barros M.H."/>
            <person name="Bonaccorsi E.D."/>
            <person name="Bordin S."/>
            <person name="Bove J.M."/>
            <person name="Briones M.R.S."/>
            <person name="Bueno M.R.P."/>
            <person name="Camargo A.A."/>
            <person name="Camargo L.E.A."/>
            <person name="Carraro D.M."/>
            <person name="Carrer H."/>
            <person name="Colauto N.B."/>
            <person name="Colombo C."/>
            <person name="Costa F.F."/>
            <person name="Costa M.C.R."/>
            <person name="Costa-Neto C.M."/>
            <person name="Coutinho L.L."/>
            <person name="Cristofani M."/>
            <person name="Dias-Neto E."/>
            <person name="Docena C."/>
            <person name="El-Dorry H."/>
            <person name="Facincani A.P."/>
            <person name="Ferreira A.J.S."/>
            <person name="Ferreira V.C.A."/>
            <person name="Ferro J.A."/>
            <person name="Fraga J.S."/>
            <person name="Franca S.C."/>
            <person name="Franco M.C."/>
            <person name="Frohme M."/>
            <person name="Furlan L.R."/>
            <person name="Garnier M."/>
            <person name="Goldman G.H."/>
            <person name="Goldman M.H.S."/>
            <person name="Gomes S.L."/>
            <person name="Gruber A."/>
            <person name="Ho P.L."/>
            <person name="Hoheisel J.D."/>
            <person name="Junqueira M.L."/>
            <person name="Kemper E.L."/>
            <person name="Kitajima J.P."/>
            <person name="Krieger J.E."/>
            <person name="Kuramae E.E."/>
            <person name="Laigret F."/>
            <person name="Lambais M.R."/>
            <person name="Leite L.C.C."/>
            <person name="Lemos E.G.M."/>
            <person name="Lemos M.V.F."/>
            <person name="Lopes S.A."/>
            <person name="Lopes C.R."/>
            <person name="Machado J.A."/>
            <person name="Machado M.A."/>
            <person name="Madeira A.M.B.N."/>
            <person name="Madeira H.M.F."/>
            <person name="Marino C.L."/>
            <person name="Marques M.V."/>
            <person name="Martins E.A.L."/>
            <person name="Martins E.M.F."/>
            <person name="Matsukuma A.Y."/>
            <person name="Menck C.F.M."/>
            <person name="Miracca E.C."/>
            <person name="Miyaki C.Y."/>
            <person name="Monteiro-Vitorello C.B."/>
            <person name="Moon D.H."/>
            <person name="Nagai M.A."/>
            <person name="Nascimento A.L.T.O."/>
            <person name="Netto L.E.S."/>
            <person name="Nhani A. Jr."/>
            <person name="Nobrega F.G."/>
            <person name="Nunes L.R."/>
            <person name="Oliveira M.A."/>
            <person name="de Oliveira M.C."/>
            <person name="de Oliveira R.C."/>
            <person name="Palmieri D.A."/>
            <person name="Paris A."/>
            <person name="Peixoto B.R."/>
            <person name="Pereira G.A.G."/>
            <person name="Pereira H.A. Jr."/>
            <person name="Pesquero J.B."/>
            <person name="Quaggio R.B."/>
            <person name="Roberto P.G."/>
            <person name="Rodrigues V."/>
            <person name="de Rosa A.J.M."/>
            <person name="de Rosa V.E. Jr."/>
            <person name="de Sa R.G."/>
            <person name="Santelli R.V."/>
            <person name="Sawasaki H.E."/>
            <person name="da Silva A.C.R."/>
            <person name="da Silva A.M."/>
            <person name="da Silva F.R."/>
            <person name="Silva W.A. Jr."/>
            <person name="da Silveira J.F."/>
            <person name="Silvestri M.L.Z."/>
            <person name="Siqueira W.J."/>
            <person name="de Souza A.A."/>
            <person name="de Souza A.P."/>
            <person name="Terenzi M.F."/>
            <person name="Truffi D."/>
            <person name="Tsai S.M."/>
            <person name="Tsuhako M.H."/>
            <person name="Vallada H."/>
            <person name="Van Sluys M.A."/>
            <person name="Verjovski-Almeida S."/>
            <person name="Vettore A.L."/>
            <person name="Zago M.A."/>
            <person name="Zatz M."/>
            <person name="Meidanis J."/>
            <person name="Setubal J.C."/>
        </authorList>
    </citation>
    <scope>NUCLEOTIDE SEQUENCE [LARGE SCALE GENOMIC DNA]</scope>
    <source>
        <strain>9a5c</strain>
    </source>
</reference>